<sequence length="322" mass="36488">MIQHLALDALQRHLAGSPLYGWATSLPAQIAARIEEGHGDLARWWSAVQRLPQVPAPKVELAQRFALHSDHDAALQAQVKEALQGLIPWRKGPFDFFGVQVDTEWRSDWKWERVSPHVELRGKRVLDVGCGNGYYQWRMLGAGAESVVGVDPNWLFLCQFLAAKRYLPELPAWHLPLALEDLPEKLEGFDTVFSMGVLYHRRSPIDHLLALKDCLKRGGELVLETLVVEGDASTVLVPEDRYAQMRNVWFLPSVAALELWLRRAGFADARCVDVSLTSVEEQRSTEWMRFQSLPEFLDPQDRSRTVEGLPAPMRATLVARKP</sequence>
<organism>
    <name type="scientific">Pseudomonas aeruginosa (strain LESB58)</name>
    <dbReference type="NCBI Taxonomy" id="557722"/>
    <lineage>
        <taxon>Bacteria</taxon>
        <taxon>Pseudomonadati</taxon>
        <taxon>Pseudomonadota</taxon>
        <taxon>Gammaproteobacteria</taxon>
        <taxon>Pseudomonadales</taxon>
        <taxon>Pseudomonadaceae</taxon>
        <taxon>Pseudomonas</taxon>
    </lineage>
</organism>
<name>CMOB_PSEA8</name>
<gene>
    <name evidence="1" type="primary">cmoB</name>
    <name type="ordered locus">PLES_45691</name>
</gene>
<keyword id="KW-0808">Transferase</keyword>
<keyword id="KW-0819">tRNA processing</keyword>
<protein>
    <recommendedName>
        <fullName evidence="1">tRNA U34 carboxymethyltransferase</fullName>
        <ecNumber evidence="1">2.5.1.-</ecNumber>
    </recommendedName>
</protein>
<proteinExistence type="inferred from homology"/>
<comment type="function">
    <text evidence="1">Catalyzes carboxymethyl transfer from carboxy-S-adenosyl-L-methionine (Cx-SAM) to 5-hydroxyuridine (ho5U) to form 5-carboxymethoxyuridine (cmo5U) at position 34 in tRNAs.</text>
</comment>
<comment type="catalytic activity">
    <reaction evidence="1">
        <text>carboxy-S-adenosyl-L-methionine + 5-hydroxyuridine(34) in tRNA = 5-carboxymethoxyuridine(34) in tRNA + S-adenosyl-L-homocysteine + H(+)</text>
        <dbReference type="Rhea" id="RHEA:52848"/>
        <dbReference type="Rhea" id="RHEA-COMP:13381"/>
        <dbReference type="Rhea" id="RHEA-COMP:13383"/>
        <dbReference type="ChEBI" id="CHEBI:15378"/>
        <dbReference type="ChEBI" id="CHEBI:57856"/>
        <dbReference type="ChEBI" id="CHEBI:134278"/>
        <dbReference type="ChEBI" id="CHEBI:136877"/>
        <dbReference type="ChEBI" id="CHEBI:136879"/>
    </reaction>
</comment>
<comment type="subunit">
    <text evidence="1">Homotetramer.</text>
</comment>
<comment type="similarity">
    <text evidence="1">Belongs to the class I-like SAM-binding methyltransferase superfamily. CmoB family.</text>
</comment>
<dbReference type="EC" id="2.5.1.-" evidence="1"/>
<dbReference type="EMBL" id="FM209186">
    <property type="protein sequence ID" value="CAW29323.1"/>
    <property type="molecule type" value="Genomic_DNA"/>
</dbReference>
<dbReference type="RefSeq" id="WP_003085573.1">
    <property type="nucleotide sequence ID" value="NC_011770.1"/>
</dbReference>
<dbReference type="SMR" id="B7UYW8"/>
<dbReference type="KEGG" id="pag:PLES_45691"/>
<dbReference type="HOGENOM" id="CLU_052665_0_0_6"/>
<dbReference type="GO" id="GO:0008168">
    <property type="term" value="F:methyltransferase activity"/>
    <property type="evidence" value="ECO:0007669"/>
    <property type="project" value="TreeGrafter"/>
</dbReference>
<dbReference type="GO" id="GO:0016765">
    <property type="term" value="F:transferase activity, transferring alkyl or aryl (other than methyl) groups"/>
    <property type="evidence" value="ECO:0007669"/>
    <property type="project" value="UniProtKB-UniRule"/>
</dbReference>
<dbReference type="GO" id="GO:0002098">
    <property type="term" value="P:tRNA wobble uridine modification"/>
    <property type="evidence" value="ECO:0007669"/>
    <property type="project" value="InterPro"/>
</dbReference>
<dbReference type="CDD" id="cd02440">
    <property type="entry name" value="AdoMet_MTases"/>
    <property type="match status" value="1"/>
</dbReference>
<dbReference type="Gene3D" id="3.40.50.150">
    <property type="entry name" value="Vaccinia Virus protein VP39"/>
    <property type="match status" value="1"/>
</dbReference>
<dbReference type="HAMAP" id="MF_01590">
    <property type="entry name" value="tRNA_carboxymethyltr_CmoB"/>
    <property type="match status" value="1"/>
</dbReference>
<dbReference type="InterPro" id="IPR010017">
    <property type="entry name" value="CmoB"/>
</dbReference>
<dbReference type="InterPro" id="IPR027555">
    <property type="entry name" value="Mo5U34_MeTrfas-like"/>
</dbReference>
<dbReference type="InterPro" id="IPR029063">
    <property type="entry name" value="SAM-dependent_MTases_sf"/>
</dbReference>
<dbReference type="NCBIfam" id="NF011650">
    <property type="entry name" value="PRK15068.1"/>
    <property type="match status" value="1"/>
</dbReference>
<dbReference type="NCBIfam" id="TIGR00452">
    <property type="entry name" value="tRNA 5-methoxyuridine(34)/uridine 5-oxyacetic acid(34) synthase CmoB"/>
    <property type="match status" value="1"/>
</dbReference>
<dbReference type="PANTHER" id="PTHR43464">
    <property type="entry name" value="METHYLTRANSFERASE"/>
    <property type="match status" value="1"/>
</dbReference>
<dbReference type="PANTHER" id="PTHR43464:SF95">
    <property type="entry name" value="TRNA U34 CARBOXYMETHYLTRANSFERASE"/>
    <property type="match status" value="1"/>
</dbReference>
<dbReference type="Pfam" id="PF08003">
    <property type="entry name" value="Methyltransf_9"/>
    <property type="match status" value="1"/>
</dbReference>
<dbReference type="SUPFAM" id="SSF53335">
    <property type="entry name" value="S-adenosyl-L-methionine-dependent methyltransferases"/>
    <property type="match status" value="1"/>
</dbReference>
<accession>B7UYW8</accession>
<evidence type="ECO:0000255" key="1">
    <source>
        <dbReference type="HAMAP-Rule" id="MF_01590"/>
    </source>
</evidence>
<reference key="1">
    <citation type="journal article" date="2009" name="Genome Res.">
        <title>Newly introduced genomic prophage islands are critical determinants of in vivo competitiveness in the Liverpool epidemic strain of Pseudomonas aeruginosa.</title>
        <authorList>
            <person name="Winstanley C."/>
            <person name="Langille M.G.I."/>
            <person name="Fothergill J.L."/>
            <person name="Kukavica-Ibrulj I."/>
            <person name="Paradis-Bleau C."/>
            <person name="Sanschagrin F."/>
            <person name="Thomson N.R."/>
            <person name="Winsor G.L."/>
            <person name="Quail M.A."/>
            <person name="Lennard N."/>
            <person name="Bignell A."/>
            <person name="Clarke L."/>
            <person name="Seeger K."/>
            <person name="Saunders D."/>
            <person name="Harris D."/>
            <person name="Parkhill J."/>
            <person name="Hancock R.E.W."/>
            <person name="Brinkman F.S.L."/>
            <person name="Levesque R.C."/>
        </authorList>
    </citation>
    <scope>NUCLEOTIDE SEQUENCE [LARGE SCALE GENOMIC DNA]</scope>
    <source>
        <strain>LESB58</strain>
    </source>
</reference>
<feature type="chain" id="PRO_1000201302" description="tRNA U34 carboxymethyltransferase">
    <location>
        <begin position="1"/>
        <end position="322"/>
    </location>
</feature>
<feature type="binding site" evidence="1">
    <location>
        <position position="91"/>
    </location>
    <ligand>
        <name>carboxy-S-adenosyl-L-methionine</name>
        <dbReference type="ChEBI" id="CHEBI:134278"/>
    </ligand>
</feature>
<feature type="binding site" evidence="1">
    <location>
        <position position="105"/>
    </location>
    <ligand>
        <name>carboxy-S-adenosyl-L-methionine</name>
        <dbReference type="ChEBI" id="CHEBI:134278"/>
    </ligand>
</feature>
<feature type="binding site" evidence="1">
    <location>
        <position position="110"/>
    </location>
    <ligand>
        <name>carboxy-S-adenosyl-L-methionine</name>
        <dbReference type="ChEBI" id="CHEBI:134278"/>
    </ligand>
</feature>
<feature type="binding site" evidence="1">
    <location>
        <position position="129"/>
    </location>
    <ligand>
        <name>carboxy-S-adenosyl-L-methionine</name>
        <dbReference type="ChEBI" id="CHEBI:134278"/>
    </ligand>
</feature>
<feature type="binding site" evidence="1">
    <location>
        <begin position="179"/>
        <end position="180"/>
    </location>
    <ligand>
        <name>carboxy-S-adenosyl-L-methionine</name>
        <dbReference type="ChEBI" id="CHEBI:134278"/>
    </ligand>
</feature>
<feature type="binding site" evidence="1">
    <location>
        <position position="195"/>
    </location>
    <ligand>
        <name>carboxy-S-adenosyl-L-methionine</name>
        <dbReference type="ChEBI" id="CHEBI:134278"/>
    </ligand>
</feature>
<feature type="binding site" evidence="1">
    <location>
        <position position="199"/>
    </location>
    <ligand>
        <name>carboxy-S-adenosyl-L-methionine</name>
        <dbReference type="ChEBI" id="CHEBI:134278"/>
    </ligand>
</feature>
<feature type="binding site" evidence="1">
    <location>
        <position position="314"/>
    </location>
    <ligand>
        <name>carboxy-S-adenosyl-L-methionine</name>
        <dbReference type="ChEBI" id="CHEBI:134278"/>
    </ligand>
</feature>